<reference key="1">
    <citation type="journal article" date="2003" name="DNA Res.">
        <title>Complete genome structure of Gloeobacter violaceus PCC 7421, a cyanobacterium that lacks thylakoids.</title>
        <authorList>
            <person name="Nakamura Y."/>
            <person name="Kaneko T."/>
            <person name="Sato S."/>
            <person name="Mimuro M."/>
            <person name="Miyashita H."/>
            <person name="Tsuchiya T."/>
            <person name="Sasamoto S."/>
            <person name="Watanabe A."/>
            <person name="Kawashima K."/>
            <person name="Kishida Y."/>
            <person name="Kiyokawa C."/>
            <person name="Kohara M."/>
            <person name="Matsumoto M."/>
            <person name="Matsuno A."/>
            <person name="Nakazaki N."/>
            <person name="Shimpo S."/>
            <person name="Takeuchi C."/>
            <person name="Yamada M."/>
            <person name="Tabata S."/>
        </authorList>
    </citation>
    <scope>NUCLEOTIDE SEQUENCE [LARGE SCALE GENOMIC DNA]</scope>
    <source>
        <strain>ATCC 29082 / PCC 7421</strain>
    </source>
</reference>
<proteinExistence type="inferred from homology"/>
<name>CYSA_GLOVI</name>
<sequence>MSILIDNVSKNFGDFQAVADIRLEIQPGNLVALLGPSGCGKSTLLRLIAGLELPDSGQIWLEGQDATRQRLQERNIGFVFQHYALFKHLTVAQNIAFGLEVRKTPKAQIKARVEELLELVQLAGYGGRYPAQLSGGQRQRVALARALAVEPRVLLLDEPFGALDARVRKDLRAWLRRLHDEVHVTTIFVTHDPEEALEVSDTIVVMNKGRVEQVGSPVEIYDHPESAFVMSFLGQVNTLPNSPELFPQLSEAVREVLVRPHDLSLSVQAGGPALAARVERLMYLGWQVQAELVLEAGQPLIVQLSREQADRLQLRPDQPVYVQVRNPKIFPAVAADKQLAEAAA</sequence>
<evidence type="ECO:0000255" key="1">
    <source>
        <dbReference type="HAMAP-Rule" id="MF_01701"/>
    </source>
</evidence>
<keyword id="KW-0067">ATP-binding</keyword>
<keyword id="KW-0997">Cell inner membrane</keyword>
<keyword id="KW-1003">Cell membrane</keyword>
<keyword id="KW-0472">Membrane</keyword>
<keyword id="KW-0547">Nucleotide-binding</keyword>
<keyword id="KW-1185">Reference proteome</keyword>
<keyword id="KW-0764">Sulfate transport</keyword>
<keyword id="KW-1278">Translocase</keyword>
<keyword id="KW-0813">Transport</keyword>
<protein>
    <recommendedName>
        <fullName evidence="1">Sulfate/thiosulfate import ATP-binding protein CysA</fullName>
        <ecNumber evidence="1">7.3.2.3</ecNumber>
    </recommendedName>
    <alternativeName>
        <fullName evidence="1">Sulfate-transporting ATPase</fullName>
    </alternativeName>
</protein>
<dbReference type="EC" id="7.3.2.3" evidence="1"/>
<dbReference type="EMBL" id="BA000045">
    <property type="protein sequence ID" value="BAC90012.1"/>
    <property type="molecule type" value="Genomic_DNA"/>
</dbReference>
<dbReference type="RefSeq" id="NP_925017.1">
    <property type="nucleotide sequence ID" value="NC_005125.1"/>
</dbReference>
<dbReference type="RefSeq" id="WP_011142069.1">
    <property type="nucleotide sequence ID" value="NC_005125.1"/>
</dbReference>
<dbReference type="SMR" id="Q7NIW1"/>
<dbReference type="FunCoup" id="Q7NIW1">
    <property type="interactions" value="74"/>
</dbReference>
<dbReference type="STRING" id="251221.gene:10759564"/>
<dbReference type="EnsemblBacteria" id="BAC90012">
    <property type="protein sequence ID" value="BAC90012"/>
    <property type="gene ID" value="BAC90012"/>
</dbReference>
<dbReference type="KEGG" id="gvi:glr2071"/>
<dbReference type="PATRIC" id="fig|251221.4.peg.2106"/>
<dbReference type="eggNOG" id="COG1118">
    <property type="taxonomic scope" value="Bacteria"/>
</dbReference>
<dbReference type="HOGENOM" id="CLU_000604_1_1_3"/>
<dbReference type="InParanoid" id="Q7NIW1"/>
<dbReference type="OrthoDB" id="508245at2"/>
<dbReference type="PhylomeDB" id="Q7NIW1"/>
<dbReference type="Proteomes" id="UP000000557">
    <property type="component" value="Chromosome"/>
</dbReference>
<dbReference type="GO" id="GO:0043190">
    <property type="term" value="C:ATP-binding cassette (ABC) transporter complex"/>
    <property type="evidence" value="ECO:0007669"/>
    <property type="project" value="InterPro"/>
</dbReference>
<dbReference type="GO" id="GO:0015419">
    <property type="term" value="F:ABC-type sulfate transporter activity"/>
    <property type="evidence" value="ECO:0007669"/>
    <property type="project" value="InterPro"/>
</dbReference>
<dbReference type="GO" id="GO:0102025">
    <property type="term" value="F:ABC-type thiosulfate transporter activity"/>
    <property type="evidence" value="ECO:0007669"/>
    <property type="project" value="RHEA"/>
</dbReference>
<dbReference type="GO" id="GO:0005524">
    <property type="term" value="F:ATP binding"/>
    <property type="evidence" value="ECO:0007669"/>
    <property type="project" value="UniProtKB-KW"/>
</dbReference>
<dbReference type="GO" id="GO:0016887">
    <property type="term" value="F:ATP hydrolysis activity"/>
    <property type="evidence" value="ECO:0007669"/>
    <property type="project" value="InterPro"/>
</dbReference>
<dbReference type="GO" id="GO:1902358">
    <property type="term" value="P:sulfate transmembrane transport"/>
    <property type="evidence" value="ECO:0000318"/>
    <property type="project" value="GO_Central"/>
</dbReference>
<dbReference type="CDD" id="cd03296">
    <property type="entry name" value="ABC_CysA_sulfate_importer"/>
    <property type="match status" value="1"/>
</dbReference>
<dbReference type="FunFam" id="3.40.50.300:FF:000425">
    <property type="entry name" value="Probable ABC transporter, ATP-binding subunit"/>
    <property type="match status" value="1"/>
</dbReference>
<dbReference type="Gene3D" id="2.40.50.100">
    <property type="match status" value="1"/>
</dbReference>
<dbReference type="Gene3D" id="3.40.50.300">
    <property type="entry name" value="P-loop containing nucleotide triphosphate hydrolases"/>
    <property type="match status" value="1"/>
</dbReference>
<dbReference type="InterPro" id="IPR003593">
    <property type="entry name" value="AAA+_ATPase"/>
</dbReference>
<dbReference type="InterPro" id="IPR050093">
    <property type="entry name" value="ABC_SmlMolc_Importer"/>
</dbReference>
<dbReference type="InterPro" id="IPR003439">
    <property type="entry name" value="ABC_transporter-like_ATP-bd"/>
</dbReference>
<dbReference type="InterPro" id="IPR017871">
    <property type="entry name" value="ABC_transporter-like_CS"/>
</dbReference>
<dbReference type="InterPro" id="IPR008995">
    <property type="entry name" value="Mo/tungstate-bd_C_term_dom"/>
</dbReference>
<dbReference type="InterPro" id="IPR027417">
    <property type="entry name" value="P-loop_NTPase"/>
</dbReference>
<dbReference type="InterPro" id="IPR005666">
    <property type="entry name" value="Sulph_transpt1"/>
</dbReference>
<dbReference type="InterPro" id="IPR013611">
    <property type="entry name" value="Transp-assoc_OB_typ2"/>
</dbReference>
<dbReference type="NCBIfam" id="TIGR00968">
    <property type="entry name" value="3a0106s01"/>
    <property type="match status" value="1"/>
</dbReference>
<dbReference type="PANTHER" id="PTHR42781">
    <property type="entry name" value="SPERMIDINE/PUTRESCINE IMPORT ATP-BINDING PROTEIN POTA"/>
    <property type="match status" value="1"/>
</dbReference>
<dbReference type="PANTHER" id="PTHR42781:SF4">
    <property type="entry name" value="SPERMIDINE_PUTRESCINE IMPORT ATP-BINDING PROTEIN POTA"/>
    <property type="match status" value="1"/>
</dbReference>
<dbReference type="Pfam" id="PF00005">
    <property type="entry name" value="ABC_tran"/>
    <property type="match status" value="1"/>
</dbReference>
<dbReference type="Pfam" id="PF08402">
    <property type="entry name" value="TOBE_2"/>
    <property type="match status" value="1"/>
</dbReference>
<dbReference type="SMART" id="SM00382">
    <property type="entry name" value="AAA"/>
    <property type="match status" value="1"/>
</dbReference>
<dbReference type="SUPFAM" id="SSF50331">
    <property type="entry name" value="MOP-like"/>
    <property type="match status" value="1"/>
</dbReference>
<dbReference type="SUPFAM" id="SSF52540">
    <property type="entry name" value="P-loop containing nucleoside triphosphate hydrolases"/>
    <property type="match status" value="1"/>
</dbReference>
<dbReference type="PROSITE" id="PS00211">
    <property type="entry name" value="ABC_TRANSPORTER_1"/>
    <property type="match status" value="1"/>
</dbReference>
<dbReference type="PROSITE" id="PS50893">
    <property type="entry name" value="ABC_TRANSPORTER_2"/>
    <property type="match status" value="1"/>
</dbReference>
<dbReference type="PROSITE" id="PS51237">
    <property type="entry name" value="CYSA"/>
    <property type="match status" value="1"/>
</dbReference>
<accession>Q7NIW1</accession>
<feature type="chain" id="PRO_0000092269" description="Sulfate/thiosulfate import ATP-binding protein CysA">
    <location>
        <begin position="1"/>
        <end position="344"/>
    </location>
</feature>
<feature type="domain" description="ABC transporter" evidence="1">
    <location>
        <begin position="3"/>
        <end position="233"/>
    </location>
</feature>
<feature type="binding site" evidence="1">
    <location>
        <begin position="35"/>
        <end position="42"/>
    </location>
    <ligand>
        <name>ATP</name>
        <dbReference type="ChEBI" id="CHEBI:30616"/>
    </ligand>
</feature>
<comment type="function">
    <text evidence="1">Part of the ABC transporter complex CysAWTP involved in sulfate/thiosulfate import. Responsible for energy coupling to the transport system.</text>
</comment>
<comment type="catalytic activity">
    <reaction evidence="1">
        <text>sulfate(out) + ATP + H2O = sulfate(in) + ADP + phosphate + H(+)</text>
        <dbReference type="Rhea" id="RHEA:10192"/>
        <dbReference type="ChEBI" id="CHEBI:15377"/>
        <dbReference type="ChEBI" id="CHEBI:15378"/>
        <dbReference type="ChEBI" id="CHEBI:16189"/>
        <dbReference type="ChEBI" id="CHEBI:30616"/>
        <dbReference type="ChEBI" id="CHEBI:43474"/>
        <dbReference type="ChEBI" id="CHEBI:456216"/>
        <dbReference type="EC" id="7.3.2.3"/>
    </reaction>
</comment>
<comment type="catalytic activity">
    <reaction evidence="1">
        <text>thiosulfate(out) + ATP + H2O = thiosulfate(in) + ADP + phosphate + H(+)</text>
        <dbReference type="Rhea" id="RHEA:29871"/>
        <dbReference type="ChEBI" id="CHEBI:15377"/>
        <dbReference type="ChEBI" id="CHEBI:15378"/>
        <dbReference type="ChEBI" id="CHEBI:30616"/>
        <dbReference type="ChEBI" id="CHEBI:33542"/>
        <dbReference type="ChEBI" id="CHEBI:43474"/>
        <dbReference type="ChEBI" id="CHEBI:456216"/>
        <dbReference type="EC" id="7.3.2.3"/>
    </reaction>
</comment>
<comment type="subunit">
    <text evidence="1">The complex is composed of two ATP-binding proteins (CysA), two transmembrane proteins (CysT and CysW) and a solute-binding protein (CysP).</text>
</comment>
<comment type="subcellular location">
    <subcellularLocation>
        <location evidence="1">Cell inner membrane</location>
        <topology evidence="1">Peripheral membrane protein</topology>
    </subcellularLocation>
</comment>
<comment type="similarity">
    <text evidence="1">Belongs to the ABC transporter superfamily. Sulfate/tungstate importer (TC 3.A.1.6) family.</text>
</comment>
<gene>
    <name evidence="1" type="primary">cysA</name>
    <name type="ordered locus">glr2071</name>
</gene>
<organism>
    <name type="scientific">Gloeobacter violaceus (strain ATCC 29082 / PCC 7421)</name>
    <dbReference type="NCBI Taxonomy" id="251221"/>
    <lineage>
        <taxon>Bacteria</taxon>
        <taxon>Bacillati</taxon>
        <taxon>Cyanobacteriota</taxon>
        <taxon>Cyanophyceae</taxon>
        <taxon>Gloeobacterales</taxon>
        <taxon>Gloeobacteraceae</taxon>
        <taxon>Gloeobacter</taxon>
    </lineage>
</organism>